<dbReference type="EMBL" id="CP000471">
    <property type="protein sequence ID" value="ABK43373.1"/>
    <property type="molecule type" value="Genomic_DNA"/>
</dbReference>
<dbReference type="RefSeq" id="WP_011712532.1">
    <property type="nucleotide sequence ID" value="NC_008576.1"/>
</dbReference>
<dbReference type="SMR" id="A0L5Y0"/>
<dbReference type="STRING" id="156889.Mmc1_0854"/>
<dbReference type="KEGG" id="mgm:Mmc1_0854"/>
<dbReference type="eggNOG" id="COG0197">
    <property type="taxonomic scope" value="Bacteria"/>
</dbReference>
<dbReference type="HOGENOM" id="CLU_078858_2_1_5"/>
<dbReference type="OrthoDB" id="9802589at2"/>
<dbReference type="Proteomes" id="UP000002586">
    <property type="component" value="Chromosome"/>
</dbReference>
<dbReference type="GO" id="GO:0022625">
    <property type="term" value="C:cytosolic large ribosomal subunit"/>
    <property type="evidence" value="ECO:0007669"/>
    <property type="project" value="TreeGrafter"/>
</dbReference>
<dbReference type="GO" id="GO:0019843">
    <property type="term" value="F:rRNA binding"/>
    <property type="evidence" value="ECO:0007669"/>
    <property type="project" value="UniProtKB-UniRule"/>
</dbReference>
<dbReference type="GO" id="GO:0003735">
    <property type="term" value="F:structural constituent of ribosome"/>
    <property type="evidence" value="ECO:0007669"/>
    <property type="project" value="InterPro"/>
</dbReference>
<dbReference type="GO" id="GO:0000049">
    <property type="term" value="F:tRNA binding"/>
    <property type="evidence" value="ECO:0007669"/>
    <property type="project" value="UniProtKB-KW"/>
</dbReference>
<dbReference type="GO" id="GO:0006412">
    <property type="term" value="P:translation"/>
    <property type="evidence" value="ECO:0007669"/>
    <property type="project" value="UniProtKB-UniRule"/>
</dbReference>
<dbReference type="CDD" id="cd01433">
    <property type="entry name" value="Ribosomal_L16_L10e"/>
    <property type="match status" value="1"/>
</dbReference>
<dbReference type="FunFam" id="3.90.1170.10:FF:000001">
    <property type="entry name" value="50S ribosomal protein L16"/>
    <property type="match status" value="1"/>
</dbReference>
<dbReference type="Gene3D" id="3.90.1170.10">
    <property type="entry name" value="Ribosomal protein L10e/L16"/>
    <property type="match status" value="1"/>
</dbReference>
<dbReference type="HAMAP" id="MF_01342">
    <property type="entry name" value="Ribosomal_uL16"/>
    <property type="match status" value="1"/>
</dbReference>
<dbReference type="InterPro" id="IPR047873">
    <property type="entry name" value="Ribosomal_uL16"/>
</dbReference>
<dbReference type="InterPro" id="IPR000114">
    <property type="entry name" value="Ribosomal_uL16_bact-type"/>
</dbReference>
<dbReference type="InterPro" id="IPR020798">
    <property type="entry name" value="Ribosomal_uL16_CS"/>
</dbReference>
<dbReference type="InterPro" id="IPR016180">
    <property type="entry name" value="Ribosomal_uL16_dom"/>
</dbReference>
<dbReference type="InterPro" id="IPR036920">
    <property type="entry name" value="Ribosomal_uL16_sf"/>
</dbReference>
<dbReference type="NCBIfam" id="TIGR01164">
    <property type="entry name" value="rplP_bact"/>
    <property type="match status" value="1"/>
</dbReference>
<dbReference type="PANTHER" id="PTHR12220">
    <property type="entry name" value="50S/60S RIBOSOMAL PROTEIN L16"/>
    <property type="match status" value="1"/>
</dbReference>
<dbReference type="PANTHER" id="PTHR12220:SF13">
    <property type="entry name" value="LARGE RIBOSOMAL SUBUNIT PROTEIN UL16M"/>
    <property type="match status" value="1"/>
</dbReference>
<dbReference type="Pfam" id="PF00252">
    <property type="entry name" value="Ribosomal_L16"/>
    <property type="match status" value="1"/>
</dbReference>
<dbReference type="PRINTS" id="PR00060">
    <property type="entry name" value="RIBOSOMALL16"/>
</dbReference>
<dbReference type="SUPFAM" id="SSF54686">
    <property type="entry name" value="Ribosomal protein L16p/L10e"/>
    <property type="match status" value="1"/>
</dbReference>
<dbReference type="PROSITE" id="PS00586">
    <property type="entry name" value="RIBOSOMAL_L16_1"/>
    <property type="match status" value="1"/>
</dbReference>
<gene>
    <name evidence="1" type="primary">rplP</name>
    <name type="ordered locus">Mmc1_0854</name>
</gene>
<comment type="function">
    <text evidence="1">Binds 23S rRNA and is also seen to make contacts with the A and possibly P site tRNAs.</text>
</comment>
<comment type="subunit">
    <text evidence="1">Part of the 50S ribosomal subunit.</text>
</comment>
<comment type="similarity">
    <text evidence="1">Belongs to the universal ribosomal protein uL16 family.</text>
</comment>
<protein>
    <recommendedName>
        <fullName evidence="1">Large ribosomal subunit protein uL16</fullName>
    </recommendedName>
    <alternativeName>
        <fullName evidence="2">50S ribosomal protein L16</fullName>
    </alternativeName>
</protein>
<feature type="chain" id="PRO_1000054648" description="Large ribosomal subunit protein uL16">
    <location>
        <begin position="1"/>
        <end position="137"/>
    </location>
</feature>
<organism>
    <name type="scientific">Magnetococcus marinus (strain ATCC BAA-1437 / JCM 17883 / MC-1)</name>
    <dbReference type="NCBI Taxonomy" id="156889"/>
    <lineage>
        <taxon>Bacteria</taxon>
        <taxon>Pseudomonadati</taxon>
        <taxon>Pseudomonadota</taxon>
        <taxon>Alphaproteobacteria</taxon>
        <taxon>Magnetococcales</taxon>
        <taxon>Magnetococcaceae</taxon>
        <taxon>Magnetococcus</taxon>
    </lineage>
</organism>
<reference key="1">
    <citation type="journal article" date="2009" name="Appl. Environ. Microbiol.">
        <title>Complete genome sequence of the chemolithoautotrophic marine magnetotactic coccus strain MC-1.</title>
        <authorList>
            <person name="Schubbe S."/>
            <person name="Williams T.J."/>
            <person name="Xie G."/>
            <person name="Kiss H.E."/>
            <person name="Brettin T.S."/>
            <person name="Martinez D."/>
            <person name="Ross C.A."/>
            <person name="Schuler D."/>
            <person name="Cox B.L."/>
            <person name="Nealson K.H."/>
            <person name="Bazylinski D.A."/>
        </authorList>
    </citation>
    <scope>NUCLEOTIDE SEQUENCE [LARGE SCALE GENOMIC DNA]</scope>
    <source>
        <strain>ATCC BAA-1437 / JCM 17883 / MC-1</strain>
    </source>
</reference>
<name>RL16_MAGMM</name>
<evidence type="ECO:0000255" key="1">
    <source>
        <dbReference type="HAMAP-Rule" id="MF_01342"/>
    </source>
</evidence>
<evidence type="ECO:0000305" key="2"/>
<keyword id="KW-1185">Reference proteome</keyword>
<keyword id="KW-0687">Ribonucleoprotein</keyword>
<keyword id="KW-0689">Ribosomal protein</keyword>
<keyword id="KW-0694">RNA-binding</keyword>
<keyword id="KW-0699">rRNA-binding</keyword>
<keyword id="KW-0820">tRNA-binding</keyword>
<accession>A0L5Y0</accession>
<proteinExistence type="inferred from homology"/>
<sequence>MLQPKKTKFRKAHKGRVHGLAYRGSSLSFGQFGLKAMATARITARQIEAARRAMTRHIKRGGRVWIRIFPDVPVSQKPAEVRQGKGKGSPEFWIARVKPGRILYEMEGVDEQLAREAMQRAAAKLPVKTKFIVREGG</sequence>